<reference key="1">
    <citation type="journal article" date="1985" name="Toxicon">
        <title>Characterization of ten proteins from the venom of the Moroccan scorpion Androctonus mauretanicus mauretanicus, six of which are toxic to the mouse.</title>
        <authorList>
            <person name="Rosso J.-P."/>
            <person name="Rochat H."/>
        </authorList>
    </citation>
    <scope>PROTEIN SEQUENCE</scope>
    <scope>AMIDATION AT ASN-64</scope>
    <source>
        <tissue>Venom</tissue>
    </source>
</reference>
<reference key="2">
    <citation type="journal article" date="2008" name="Toxicon">
        <title>New analysis of the toxic compounds from the Androctonus mauretanicus mauretanicus scorpion venom.</title>
        <authorList>
            <person name="Oukkache N."/>
            <person name="Rosso J.-P."/>
            <person name="Alami M."/>
            <person name="Ghalim N."/>
            <person name="Saile R."/>
            <person name="Hassar M."/>
            <person name="Bougis P.E."/>
            <person name="Martin-Eauclaire M.-F."/>
        </authorList>
    </citation>
    <scope>PARTIAL PROTEIN SEQUENCE</scope>
    <scope>MASS SPECTROMETRY</scope>
    <source>
        <tissue>Venom</tissue>
    </source>
</reference>
<evidence type="ECO:0000250" key="1"/>
<evidence type="ECO:0000255" key="2">
    <source>
        <dbReference type="PROSITE-ProRule" id="PRU01210"/>
    </source>
</evidence>
<evidence type="ECO:0000269" key="3">
    <source>
    </source>
</evidence>
<evidence type="ECO:0000269" key="4">
    <source>
    </source>
</evidence>
<evidence type="ECO:0000305" key="5"/>
<sequence length="64" mass="7301">LKDGYIIDDLNCTFFCGRNAYCDDECKKKGGESGYCQWASPYGNACWCYKLPDRVSIKEKGRCN</sequence>
<feature type="chain" id="PRO_0000066723" description="Alpha-toxin Amm5">
    <location>
        <begin position="1"/>
        <end position="64"/>
    </location>
</feature>
<feature type="domain" description="LCN-type CS-alpha/beta" evidence="2">
    <location>
        <begin position="2"/>
        <end position="64"/>
    </location>
</feature>
<feature type="modified residue" description="Asparagine amide" evidence="4">
    <location>
        <position position="64"/>
    </location>
</feature>
<feature type="disulfide bond" evidence="2">
    <location>
        <begin position="12"/>
        <end position="63"/>
    </location>
</feature>
<feature type="disulfide bond" evidence="2">
    <location>
        <begin position="16"/>
        <end position="36"/>
    </location>
</feature>
<feature type="disulfide bond" evidence="2">
    <location>
        <begin position="22"/>
        <end position="46"/>
    </location>
</feature>
<feature type="disulfide bond" evidence="2">
    <location>
        <begin position="26"/>
        <end position="48"/>
    </location>
</feature>
<keyword id="KW-0027">Amidation</keyword>
<keyword id="KW-0903">Direct protein sequencing</keyword>
<keyword id="KW-1015">Disulfide bond</keyword>
<keyword id="KW-0872">Ion channel impairing toxin</keyword>
<keyword id="KW-0528">Neurotoxin</keyword>
<keyword id="KW-0964">Secreted</keyword>
<keyword id="KW-0800">Toxin</keyword>
<keyword id="KW-0738">Voltage-gated sodium channel impairing toxin</keyword>
<organism>
    <name type="scientific">Androctonus mauritanicus mauritanicus</name>
    <name type="common">Scorpion</name>
    <dbReference type="NCBI Taxonomy" id="6860"/>
    <lineage>
        <taxon>Eukaryota</taxon>
        <taxon>Metazoa</taxon>
        <taxon>Ecdysozoa</taxon>
        <taxon>Arthropoda</taxon>
        <taxon>Chelicerata</taxon>
        <taxon>Arachnida</taxon>
        <taxon>Scorpiones</taxon>
        <taxon>Buthida</taxon>
        <taxon>Buthoidea</taxon>
        <taxon>Buthidae</taxon>
        <taxon>Androctonus</taxon>
    </lineage>
</organism>
<proteinExistence type="evidence at protein level"/>
<comment type="function">
    <text evidence="1">Alpha toxins bind voltage-independently at site-3 of sodium channels (Nav) and inhibit the inactivation of the activated channels, thereby blocking neuronal transmission.</text>
</comment>
<comment type="subcellular location">
    <subcellularLocation>
        <location>Secreted</location>
    </subcellularLocation>
</comment>
<comment type="tissue specificity">
    <text>Expressed by the venom gland.</text>
</comment>
<comment type="domain">
    <text evidence="5">Has the structural arrangement of an alpha-helix connected to antiparallel beta-sheets by disulfide bonds (CS-alpha/beta).</text>
</comment>
<comment type="mass spectrometry" mass="7280.0" method="MALDI" evidence="3"/>
<comment type="similarity">
    <text evidence="5">Belongs to the long (4 C-C) scorpion toxin superfamily. Sodium channel inhibitor family. Alpha subfamily.</text>
</comment>
<accession>P01482</accession>
<dbReference type="PIR" id="A01742">
    <property type="entry name" value="NTSR5M"/>
</dbReference>
<dbReference type="SMR" id="P01482"/>
<dbReference type="GO" id="GO:0005576">
    <property type="term" value="C:extracellular region"/>
    <property type="evidence" value="ECO:0007669"/>
    <property type="project" value="UniProtKB-SubCell"/>
</dbReference>
<dbReference type="GO" id="GO:0019871">
    <property type="term" value="F:sodium channel inhibitor activity"/>
    <property type="evidence" value="ECO:0007669"/>
    <property type="project" value="InterPro"/>
</dbReference>
<dbReference type="GO" id="GO:0090729">
    <property type="term" value="F:toxin activity"/>
    <property type="evidence" value="ECO:0007669"/>
    <property type="project" value="UniProtKB-KW"/>
</dbReference>
<dbReference type="GO" id="GO:0006952">
    <property type="term" value="P:defense response"/>
    <property type="evidence" value="ECO:0007669"/>
    <property type="project" value="InterPro"/>
</dbReference>
<dbReference type="CDD" id="cd23106">
    <property type="entry name" value="neurotoxins_LC_scorpion"/>
    <property type="match status" value="1"/>
</dbReference>
<dbReference type="FunFam" id="3.30.30.10:FF:000002">
    <property type="entry name" value="Alpha-like toxin BmK-M1"/>
    <property type="match status" value="1"/>
</dbReference>
<dbReference type="Gene3D" id="3.30.30.10">
    <property type="entry name" value="Knottin, scorpion toxin-like"/>
    <property type="match status" value="1"/>
</dbReference>
<dbReference type="InterPro" id="IPR044062">
    <property type="entry name" value="LCN-type_CS_alpha_beta_dom"/>
</dbReference>
<dbReference type="InterPro" id="IPR003614">
    <property type="entry name" value="Scorpion_toxin-like"/>
</dbReference>
<dbReference type="InterPro" id="IPR036574">
    <property type="entry name" value="Scorpion_toxin-like_sf"/>
</dbReference>
<dbReference type="InterPro" id="IPR018218">
    <property type="entry name" value="Scorpion_toxinL"/>
</dbReference>
<dbReference type="InterPro" id="IPR002061">
    <property type="entry name" value="Scorpion_toxinL/defensin"/>
</dbReference>
<dbReference type="Pfam" id="PF00537">
    <property type="entry name" value="Toxin_3"/>
    <property type="match status" value="1"/>
</dbReference>
<dbReference type="PRINTS" id="PR00285">
    <property type="entry name" value="SCORPNTOXIN"/>
</dbReference>
<dbReference type="PRINTS" id="PR00284">
    <property type="entry name" value="TOXIN"/>
</dbReference>
<dbReference type="SMART" id="SM00505">
    <property type="entry name" value="Knot1"/>
    <property type="match status" value="1"/>
</dbReference>
<dbReference type="SUPFAM" id="SSF57095">
    <property type="entry name" value="Scorpion toxin-like"/>
    <property type="match status" value="1"/>
</dbReference>
<dbReference type="PROSITE" id="PS51863">
    <property type="entry name" value="LCN_CSAB"/>
    <property type="match status" value="1"/>
</dbReference>
<protein>
    <recommendedName>
        <fullName>Alpha-toxin Amm5</fullName>
    </recommendedName>
    <alternativeName>
        <fullName>Amm V</fullName>
        <shortName>AmmV</shortName>
    </alternativeName>
    <alternativeName>
        <fullName>Neurotoxin 5</fullName>
    </alternativeName>
    <alternativeName>
        <fullName>Neurotoxin V</fullName>
    </alternativeName>
</protein>
<name>SCX5_ANDMA</name>